<sequence length="956" mass="102823">MTRRTMEKPFGCFLLLFCFTISIFFYSAAALTDEEASFLTRRQLLALSENGDLPDDIEYEVDLDLKFANNRLKRAYIALQAWKKAFYSDPFNTAANWVGPDVCSYKGVFCAPALDDPSVLVVAGIDLNHADIAGYLPPELGLLTDVALFHVNSNRFCGVIPKSLSKLTLMYEFDVSNNRFVGPFPTVALSWPSLKFLDIRYNDFEGKLPPEIFDKDLDAIFLNNNRFESTIPETIGKSTASVVTFAHNKFSGCIPKTIGQMKNLNEIVFIGNNLSGCLPNEIGSLNNVTVFDASSNGFVGSLPSTLSGLANVEQMDFSYNKFTGFVTDNICKLPKLSNFTFSYNFFNGEAQSCVPGSSQEKQFDDTSNCLQNRPNQKSAKECLPVVSRPVDCSKDKCAGGGGGGSNPSPKPTPTPKAPEPKKEINPPNLEEPSKPKPEESPKPQQPSPKPETPSHEPSNPKEPKPESPKQESPKTEQPKPKPESPKQESPKQEAPKPEQPKPKPESPKQESSKQEPPKPEESPKPEPPKPEESPKPQPPKQETPKPEESPKPQPPKQETPKPEESPKPQPPKQETPKPEESPKPQPPKQEQPPKTEAPKMGSPPLESPVPNDPYDASPIKKRRPQPPSPSTEETKTTSPQSPPVHSPPPPPPVHSPPPPVFSPPPPMHSPPPPVYSPPPPVHSPPPPPVHSPPPPVHSPPPPVHSPPPPVHSPPPPVHSPPPPVHSPPPPVQSPPPPPVFSPPPPAPIYSPPPPPVHSPPPPVHSPPPPPVHSPPPPVHSPPPPVHSPPPPVHSPPPPVHSPPPPSPIYSPPPPVFSPPPKPVTPLPPATSPMANAPTPSSSESGEISTPVQAPTPDSEDIEAPSDSNHSPVFKSSPAPSPDSEPEVEAPVPSSEPEVEAPKQSEATPSSSPPSSNPSPDVTAPPSEDNDDGDNFILPPNIGHQYASPPPPMFPGY</sequence>
<evidence type="ECO:0000250" key="1"/>
<evidence type="ECO:0000255" key="2"/>
<evidence type="ECO:0000256" key="3">
    <source>
        <dbReference type="SAM" id="MobiDB-lite"/>
    </source>
</evidence>
<evidence type="ECO:0000269" key="4">
    <source>
    </source>
</evidence>
<evidence type="ECO:0000305" key="5"/>
<evidence type="ECO:0007829" key="6">
    <source>
        <dbReference type="PDB" id="6TME"/>
    </source>
</evidence>
<protein>
    <recommendedName>
        <fullName>Pollen-specific leucine-rich repeat extensin-like protein 1</fullName>
        <shortName>AtPEX1</shortName>
        <shortName>Pollen-specific LRR/EXTENSIN1</shortName>
    </recommendedName>
    <alternativeName>
        <fullName>Cell wall hydroxyproline-rich glycoprotein</fullName>
    </alternativeName>
</protein>
<proteinExistence type="evidence at protein level"/>
<feature type="signal peptide" evidence="2">
    <location>
        <begin position="1"/>
        <end position="30"/>
    </location>
</feature>
<feature type="chain" id="PRO_0000395468" description="Pollen-specific leucine-rich repeat extensin-like protein 1">
    <location>
        <begin position="31"/>
        <end position="956"/>
    </location>
</feature>
<feature type="repeat" description="LRR 1">
    <location>
        <begin position="39"/>
        <end position="59"/>
    </location>
</feature>
<feature type="repeat" description="LRR 2">
    <location>
        <begin position="60"/>
        <end position="84"/>
    </location>
</feature>
<feature type="repeat" description="LRR 3">
    <location>
        <begin position="119"/>
        <end position="143"/>
    </location>
</feature>
<feature type="repeat" description="LRR 4">
    <location>
        <begin position="144"/>
        <end position="166"/>
    </location>
</feature>
<feature type="repeat" description="LRR 5">
    <location>
        <begin position="168"/>
        <end position="191"/>
    </location>
</feature>
<feature type="repeat" description="LRR 6">
    <location>
        <begin position="192"/>
        <end position="215"/>
    </location>
</feature>
<feature type="repeat" description="LRR 7">
    <location>
        <begin position="217"/>
        <end position="238"/>
    </location>
</feature>
<feature type="repeat" description="LRR 8">
    <location>
        <begin position="240"/>
        <end position="261"/>
    </location>
</feature>
<feature type="repeat" description="LRR 9">
    <location>
        <begin position="262"/>
        <end position="285"/>
    </location>
</feature>
<feature type="repeat" description="LRR 10">
    <location>
        <begin position="287"/>
        <end position="309"/>
    </location>
</feature>
<feature type="repeat" description="LRR 11">
    <location>
        <begin position="310"/>
        <end position="332"/>
    </location>
</feature>
<feature type="region of interest" description="Disordered" evidence="3">
    <location>
        <begin position="355"/>
        <end position="380"/>
    </location>
</feature>
<feature type="region of interest" description="Disordered" evidence="3">
    <location>
        <begin position="397"/>
        <end position="956"/>
    </location>
</feature>
<feature type="region of interest" description="Contains the Ser-Pro(4) repeats">
    <location>
        <begin position="651"/>
        <end position="956"/>
    </location>
</feature>
<feature type="compositionally biased region" description="Polar residues" evidence="3">
    <location>
        <begin position="355"/>
        <end position="377"/>
    </location>
</feature>
<feature type="compositionally biased region" description="Pro residues" evidence="3">
    <location>
        <begin position="408"/>
        <end position="417"/>
    </location>
</feature>
<feature type="compositionally biased region" description="Basic and acidic residues" evidence="3">
    <location>
        <begin position="431"/>
        <end position="441"/>
    </location>
</feature>
<feature type="compositionally biased region" description="Basic and acidic residues" evidence="3">
    <location>
        <begin position="452"/>
        <end position="534"/>
    </location>
</feature>
<feature type="compositionally biased region" description="Pro residues" evidence="3">
    <location>
        <begin position="640"/>
        <end position="830"/>
    </location>
</feature>
<feature type="compositionally biased region" description="Polar residues" evidence="3">
    <location>
        <begin position="837"/>
        <end position="852"/>
    </location>
</feature>
<feature type="compositionally biased region" description="Pro residues" evidence="3">
    <location>
        <begin position="947"/>
        <end position="956"/>
    </location>
</feature>
<feature type="glycosylation site" description="N-linked (GlcNAc...) asparagine" evidence="2">
    <location>
        <position position="273"/>
    </location>
</feature>
<feature type="glycosylation site" description="N-linked (GlcNAc...) asparagine" evidence="2">
    <location>
        <position position="287"/>
    </location>
</feature>
<feature type="glycosylation site" description="N-linked (GlcNAc...) asparagine" evidence="2">
    <location>
        <position position="338"/>
    </location>
</feature>
<feature type="sequence conflict" description="In Ref. 3; AAM13864." evidence="5" ref="3">
    <original>R</original>
    <variation>C</variation>
    <location>
        <position position="622"/>
    </location>
</feature>
<feature type="helix" evidence="6">
    <location>
        <begin position="71"/>
        <end position="84"/>
    </location>
</feature>
<feature type="turn" evidence="6">
    <location>
        <begin position="93"/>
        <end position="96"/>
    </location>
</feature>
<feature type="helix" evidence="6">
    <location>
        <begin position="102"/>
        <end position="104"/>
    </location>
</feature>
<feature type="strand" evidence="6">
    <location>
        <begin position="108"/>
        <end position="113"/>
    </location>
</feature>
<feature type="strand" evidence="6">
    <location>
        <begin position="116"/>
        <end position="126"/>
    </location>
</feature>
<feature type="helix" evidence="6">
    <location>
        <begin position="138"/>
        <end position="142"/>
    </location>
</feature>
<feature type="strand" evidence="6">
    <location>
        <begin position="148"/>
        <end position="150"/>
    </location>
</feature>
<feature type="strand" evidence="6">
    <location>
        <begin position="155"/>
        <end position="158"/>
    </location>
</feature>
<feature type="helix" evidence="6">
    <location>
        <begin position="162"/>
        <end position="166"/>
    </location>
</feature>
<feature type="strand" evidence="6">
    <location>
        <begin position="172"/>
        <end position="174"/>
    </location>
</feature>
<feature type="strand" evidence="6">
    <location>
        <begin position="177"/>
        <end position="183"/>
    </location>
</feature>
<feature type="helix" evidence="6">
    <location>
        <begin position="186"/>
        <end position="190"/>
    </location>
</feature>
<feature type="strand" evidence="6">
    <location>
        <begin position="196"/>
        <end position="198"/>
    </location>
</feature>
<feature type="strand" evidence="6">
    <location>
        <begin position="201"/>
        <end position="206"/>
    </location>
</feature>
<feature type="helix" evidence="6">
    <location>
        <begin position="210"/>
        <end position="214"/>
    </location>
</feature>
<feature type="strand" evidence="6">
    <location>
        <begin position="218"/>
        <end position="221"/>
    </location>
</feature>
<feature type="strand" evidence="6">
    <location>
        <begin position="224"/>
        <end position="229"/>
    </location>
</feature>
<feature type="helix" evidence="6">
    <location>
        <begin position="233"/>
        <end position="237"/>
    </location>
</feature>
<feature type="strand" evidence="6">
    <location>
        <begin position="241"/>
        <end position="244"/>
    </location>
</feature>
<feature type="strand" evidence="6">
    <location>
        <begin position="247"/>
        <end position="252"/>
    </location>
</feature>
<feature type="helix" evidence="6">
    <location>
        <begin position="256"/>
        <end position="260"/>
    </location>
</feature>
<feature type="strand" evidence="6">
    <location>
        <begin position="266"/>
        <end position="268"/>
    </location>
</feature>
<feature type="strand" evidence="6">
    <location>
        <begin position="271"/>
        <end position="277"/>
    </location>
</feature>
<feature type="helix" evidence="6">
    <location>
        <begin position="280"/>
        <end position="284"/>
    </location>
</feature>
<feature type="strand" evidence="6">
    <location>
        <begin position="289"/>
        <end position="292"/>
    </location>
</feature>
<feature type="strand" evidence="6">
    <location>
        <begin position="295"/>
        <end position="300"/>
    </location>
</feature>
<feature type="helix" evidence="6">
    <location>
        <begin position="304"/>
        <end position="308"/>
    </location>
</feature>
<feature type="strand" evidence="6">
    <location>
        <begin position="314"/>
        <end position="316"/>
    </location>
</feature>
<feature type="strand" evidence="6">
    <location>
        <begin position="323"/>
        <end position="326"/>
    </location>
</feature>
<feature type="helix" evidence="6">
    <location>
        <begin position="328"/>
        <end position="331"/>
    </location>
</feature>
<feature type="strand" evidence="6">
    <location>
        <begin position="338"/>
        <end position="340"/>
    </location>
</feature>
<feature type="strand" evidence="6">
    <location>
        <begin position="343"/>
        <end position="349"/>
    </location>
</feature>
<feature type="helix" evidence="6">
    <location>
        <begin position="351"/>
        <end position="353"/>
    </location>
</feature>
<feature type="strand" evidence="6">
    <location>
        <begin position="362"/>
        <end position="364"/>
    </location>
</feature>
<feature type="helix" evidence="6">
    <location>
        <begin position="379"/>
        <end position="386"/>
    </location>
</feature>
<reference key="1">
    <citation type="journal article" date="2000" name="DNA Res.">
        <title>Structural analysis of Arabidopsis thaliana chromosome 3. II. Sequence features of the 4,251,695 bp regions covered by 90 P1, TAC and BAC clones.</title>
        <authorList>
            <person name="Kaneko T."/>
            <person name="Katoh T."/>
            <person name="Sato S."/>
            <person name="Nakamura Y."/>
            <person name="Asamizu E."/>
            <person name="Tabata S."/>
        </authorList>
    </citation>
    <scope>NUCLEOTIDE SEQUENCE [LARGE SCALE GENOMIC DNA]</scope>
    <source>
        <strain>cv. Columbia</strain>
    </source>
</reference>
<reference key="2">
    <citation type="journal article" date="2017" name="Plant J.">
        <title>Araport11: a complete reannotation of the Arabidopsis thaliana reference genome.</title>
        <authorList>
            <person name="Cheng C.Y."/>
            <person name="Krishnakumar V."/>
            <person name="Chan A.P."/>
            <person name="Thibaud-Nissen F."/>
            <person name="Schobel S."/>
            <person name="Town C.D."/>
        </authorList>
    </citation>
    <scope>GENOME REANNOTATION</scope>
    <source>
        <strain>cv. Columbia</strain>
    </source>
</reference>
<reference key="3">
    <citation type="journal article" date="2003" name="Science">
        <title>Empirical analysis of transcriptional activity in the Arabidopsis genome.</title>
        <authorList>
            <person name="Yamada K."/>
            <person name="Lim J."/>
            <person name="Dale J.M."/>
            <person name="Chen H."/>
            <person name="Shinn P."/>
            <person name="Palm C.J."/>
            <person name="Southwick A.M."/>
            <person name="Wu H.C."/>
            <person name="Kim C.J."/>
            <person name="Nguyen M."/>
            <person name="Pham P.K."/>
            <person name="Cheuk R.F."/>
            <person name="Karlin-Newmann G."/>
            <person name="Liu S.X."/>
            <person name="Lam B."/>
            <person name="Sakano H."/>
            <person name="Wu T."/>
            <person name="Yu G."/>
            <person name="Miranda M."/>
            <person name="Quach H.L."/>
            <person name="Tripp M."/>
            <person name="Chang C.H."/>
            <person name="Lee J.M."/>
            <person name="Toriumi M.J."/>
            <person name="Chan M.M."/>
            <person name="Tang C.C."/>
            <person name="Onodera C.S."/>
            <person name="Deng J.M."/>
            <person name="Akiyama K."/>
            <person name="Ansari Y."/>
            <person name="Arakawa T."/>
            <person name="Banh J."/>
            <person name="Banno F."/>
            <person name="Bowser L."/>
            <person name="Brooks S.Y."/>
            <person name="Carninci P."/>
            <person name="Chao Q."/>
            <person name="Choy N."/>
            <person name="Enju A."/>
            <person name="Goldsmith A.D."/>
            <person name="Gurjal M."/>
            <person name="Hansen N.F."/>
            <person name="Hayashizaki Y."/>
            <person name="Johnson-Hopson C."/>
            <person name="Hsuan V.W."/>
            <person name="Iida K."/>
            <person name="Karnes M."/>
            <person name="Khan S."/>
            <person name="Koesema E."/>
            <person name="Ishida J."/>
            <person name="Jiang P.X."/>
            <person name="Jones T."/>
            <person name="Kawai J."/>
            <person name="Kamiya A."/>
            <person name="Meyers C."/>
            <person name="Nakajima M."/>
            <person name="Narusaka M."/>
            <person name="Seki M."/>
            <person name="Sakurai T."/>
            <person name="Satou M."/>
            <person name="Tamse R."/>
            <person name="Vaysberg M."/>
            <person name="Wallender E.K."/>
            <person name="Wong C."/>
            <person name="Yamamura Y."/>
            <person name="Yuan S."/>
            <person name="Shinozaki K."/>
            <person name="Davis R.W."/>
            <person name="Theologis A."/>
            <person name="Ecker J.R."/>
        </authorList>
    </citation>
    <scope>NUCLEOTIDE SEQUENCE [LARGE SCALE MRNA] OF 1-712</scope>
    <source>
        <strain>cv. Columbia</strain>
    </source>
</reference>
<reference key="4">
    <citation type="journal article" date="2003" name="Plant Physiol.">
        <title>Whole-genome comparison of leucine-rich repeat extensins in Arabidopsis and rice. A conserved family of cell wall proteins form a vegetative and a reproductive clade.</title>
        <authorList>
            <person name="Baumberger N."/>
            <person name="Doesseger B."/>
            <person name="Guyot R."/>
            <person name="Diet A."/>
            <person name="Parsons R.L."/>
            <person name="Clark M.A."/>
            <person name="Simmons M.P."/>
            <person name="Bedinger P."/>
            <person name="Goff S.A."/>
            <person name="Ringli C."/>
            <person name="Keller B."/>
        </authorList>
    </citation>
    <scope>TISSUE SPECIFICITY</scope>
    <scope>GENE FAMILY</scope>
    <scope>NOMENCLATURE</scope>
</reference>
<organism>
    <name type="scientific">Arabidopsis thaliana</name>
    <name type="common">Mouse-ear cress</name>
    <dbReference type="NCBI Taxonomy" id="3702"/>
    <lineage>
        <taxon>Eukaryota</taxon>
        <taxon>Viridiplantae</taxon>
        <taxon>Streptophyta</taxon>
        <taxon>Embryophyta</taxon>
        <taxon>Tracheophyta</taxon>
        <taxon>Spermatophyta</taxon>
        <taxon>Magnoliopsida</taxon>
        <taxon>eudicotyledons</taxon>
        <taxon>Gunneridae</taxon>
        <taxon>Pentapetalae</taxon>
        <taxon>rosids</taxon>
        <taxon>malvids</taxon>
        <taxon>Brassicales</taxon>
        <taxon>Brassicaceae</taxon>
        <taxon>Camelineae</taxon>
        <taxon>Arabidopsis</taxon>
    </lineage>
</organism>
<keyword id="KW-0002">3D-structure</keyword>
<keyword id="KW-0134">Cell wall</keyword>
<keyword id="KW-0961">Cell wall biogenesis/degradation</keyword>
<keyword id="KW-0325">Glycoprotein</keyword>
<keyword id="KW-0379">Hydroxylation</keyword>
<keyword id="KW-0433">Leucine-rich repeat</keyword>
<keyword id="KW-1185">Reference proteome</keyword>
<keyword id="KW-0677">Repeat</keyword>
<keyword id="KW-0964">Secreted</keyword>
<keyword id="KW-0732">Signal</keyword>
<gene>
    <name type="primary">PEX1</name>
    <name type="ordered locus">At3g19020</name>
    <name type="ORF">K13E13.23</name>
</gene>
<name>PLRX1_ARATH</name>
<dbReference type="EMBL" id="AP000735">
    <property type="protein sequence ID" value="BAB01698.1"/>
    <property type="molecule type" value="Genomic_DNA"/>
</dbReference>
<dbReference type="EMBL" id="CP002686">
    <property type="protein sequence ID" value="AEE76184.1"/>
    <property type="molecule type" value="Genomic_DNA"/>
</dbReference>
<dbReference type="EMBL" id="AY091043">
    <property type="protein sequence ID" value="AAM13864.1"/>
    <property type="molecule type" value="mRNA"/>
</dbReference>
<dbReference type="RefSeq" id="NP_188532.2">
    <property type="nucleotide sequence ID" value="NM_112788.3"/>
</dbReference>
<dbReference type="PDB" id="6QWN">
    <property type="method" value="X-ray"/>
    <property type="resolution" value="3.89 A"/>
    <property type="chains" value="A/B/C/D/E=31-400"/>
</dbReference>
<dbReference type="PDB" id="6TME">
    <property type="method" value="X-ray"/>
    <property type="resolution" value="2.33 A"/>
    <property type="chains" value="A/B=31-400"/>
</dbReference>
<dbReference type="PDBsum" id="6QWN"/>
<dbReference type="PDBsum" id="6TME"/>
<dbReference type="SMR" id="Q9LJ64"/>
<dbReference type="FunCoup" id="Q9LJ64">
    <property type="interactions" value="275"/>
</dbReference>
<dbReference type="STRING" id="3702.Q9LJ64"/>
<dbReference type="TCDB" id="3.A.20.1.2">
    <property type="family name" value="the peroxisomal protein importer (ppi) family"/>
</dbReference>
<dbReference type="GlyCosmos" id="Q9LJ64">
    <property type="glycosylation" value="3 sites, No reported glycans"/>
</dbReference>
<dbReference type="GlyGen" id="Q9LJ64">
    <property type="glycosylation" value="8 sites"/>
</dbReference>
<dbReference type="PaxDb" id="3702-AT3G19020.1"/>
<dbReference type="ProteomicsDB" id="236637"/>
<dbReference type="EnsemblPlants" id="AT3G19020.1">
    <property type="protein sequence ID" value="AT3G19020.1"/>
    <property type="gene ID" value="AT3G19020"/>
</dbReference>
<dbReference type="GeneID" id="821435"/>
<dbReference type="Gramene" id="AT3G19020.1">
    <property type="protein sequence ID" value="AT3G19020.1"/>
    <property type="gene ID" value="AT3G19020"/>
</dbReference>
<dbReference type="KEGG" id="ath:AT3G19020"/>
<dbReference type="Araport" id="AT3G19020"/>
<dbReference type="TAIR" id="AT3G19020">
    <property type="gene designation" value="LRX8"/>
</dbReference>
<dbReference type="eggNOG" id="ENOG502QRPA">
    <property type="taxonomic scope" value="Eukaryota"/>
</dbReference>
<dbReference type="HOGENOM" id="CLU_000288_23_3_1"/>
<dbReference type="InParanoid" id="Q9LJ64"/>
<dbReference type="OMA" id="ESPIIWH"/>
<dbReference type="PRO" id="PR:Q9LJ64"/>
<dbReference type="Proteomes" id="UP000006548">
    <property type="component" value="Chromosome 3"/>
</dbReference>
<dbReference type="ExpressionAtlas" id="Q9LJ64">
    <property type="expression patterns" value="baseline and differential"/>
</dbReference>
<dbReference type="GO" id="GO:0005576">
    <property type="term" value="C:extracellular region"/>
    <property type="evidence" value="ECO:0007669"/>
    <property type="project" value="UniProtKB-KW"/>
</dbReference>
<dbReference type="GO" id="GO:0005199">
    <property type="term" value="F:structural constituent of cell wall"/>
    <property type="evidence" value="ECO:0000250"/>
    <property type="project" value="TAIR"/>
</dbReference>
<dbReference type="GO" id="GO:0071555">
    <property type="term" value="P:cell wall organization"/>
    <property type="evidence" value="ECO:0007669"/>
    <property type="project" value="UniProtKB-KW"/>
</dbReference>
<dbReference type="GO" id="GO:0009860">
    <property type="term" value="P:pollen tube growth"/>
    <property type="evidence" value="ECO:0000316"/>
    <property type="project" value="TAIR"/>
</dbReference>
<dbReference type="FunFam" id="3.80.10.10:FF:000742">
    <property type="entry name" value="Pollen-specific leucine-rich repeat extensin-like protein 1"/>
    <property type="match status" value="1"/>
</dbReference>
<dbReference type="Gene3D" id="3.80.10.10">
    <property type="entry name" value="Ribonuclease Inhibitor"/>
    <property type="match status" value="1"/>
</dbReference>
<dbReference type="InterPro" id="IPR001611">
    <property type="entry name" value="Leu-rich_rpt"/>
</dbReference>
<dbReference type="InterPro" id="IPR032675">
    <property type="entry name" value="LRR_dom_sf"/>
</dbReference>
<dbReference type="InterPro" id="IPR051582">
    <property type="entry name" value="LRR_extensin-like_regulator"/>
</dbReference>
<dbReference type="InterPro" id="IPR013210">
    <property type="entry name" value="LRR_N_plant-typ"/>
</dbReference>
<dbReference type="PANTHER" id="PTHR32093">
    <property type="entry name" value="LEUCINE-RICH REPEAT EXTENSIN-LIKE PROTEIN 3-RELATED"/>
    <property type="match status" value="1"/>
</dbReference>
<dbReference type="PANTHER" id="PTHR32093:SF124">
    <property type="entry name" value="POLLEN-SPECIFIC LEUCINE-RICH REPEAT EXTENSIN-LIKE PROTEIN 1"/>
    <property type="match status" value="1"/>
</dbReference>
<dbReference type="Pfam" id="PF00560">
    <property type="entry name" value="LRR_1"/>
    <property type="match status" value="1"/>
</dbReference>
<dbReference type="Pfam" id="PF08263">
    <property type="entry name" value="LRRNT_2"/>
    <property type="match status" value="1"/>
</dbReference>
<dbReference type="SUPFAM" id="SSF52058">
    <property type="entry name" value="L domain-like"/>
    <property type="match status" value="1"/>
</dbReference>
<comment type="function">
    <text evidence="1">Modulates cell morphogenesis by regulating cell wall formation and assembly, and/or growth polarization.</text>
</comment>
<comment type="subcellular location">
    <subcellularLocation>
        <location evidence="1">Secreted</location>
        <location evidence="1">Cell wall</location>
    </subcellularLocation>
</comment>
<comment type="tissue specificity">
    <text evidence="4">Expressed in flowers, stamen, pollen, and pollinated carpels.</text>
</comment>
<comment type="PTM">
    <text evidence="1">Hydroxylated on proline residues in the S-P-P-P-P repeat.</text>
</comment>
<comment type="PTM">
    <text evidence="1">O-glycosylated on hydroxyprolines.</text>
</comment>
<accession>Q9LJ64</accession>
<accession>Q8RWX5</accession>